<sequence>MEVDGAEPARRRSTRATRGRHSKYEEAVEEPGKVKSDKKDPKTSDKNPKTTKLKTPTKAKTTTRSKARKKSKNDEEGVVRCPCGATEDDPSDGKIMIECEDCLEWQHSQCVLQTNDLEQVPDHYVCNECTEKKTQEKETTEAQEESEDKGKGEEEKDSNDKDEKYDSTYVPNNETAEKEPVARVSKSTHKRVGHIDDITEKVRKSAASALKGIFVSVPTSKYSPGAGVSPEQFCETLALTIEQELYDAYGTVEPEIGSNYRDKFRTLSFNLRDSKNETLRIRVMTGQVTPQTLVAMSSEEMMNPELQKLAEEVRAEAIRDTVLVVDEAPRLRRTHKGEEIVGEYEEYIDNVDQALKMERQRDGDGKEAAESRNQIERAVRDIEGANGEADSKTSNSPKESSNSPIVPKWKRDIDLAQGESDHEHDHDHNSDHEDKVNGILGDVSREAREAETDDWTTISEAPFVWTGTVPMAGLDKTSCAAFSLGSSSVHFNPNVSWGSVFYASKPLTIEGRLDKSKADPYLSKVLGAGTRDVAAFCLLPSDSSESDREAYYKLYEYFHSRSKYGVIHNRSTLVKDAYLIPLAPDDAPPYTLGSLVKPSVELSSLKRSRPLLVALYIVGKLSPKRGAAVSVESHVASSEKHPPKRQSMRDRVKQNAGNAGNASRRASDARKSTPPVTATPVTPAAPTLVAPVNAPVGPAPVVPPYAGFQGGVYGAPVGIQRVPGAPMGVPGVPIAPAGMPGVPVAPLGMHGAPAHHMAQSGTPIAPAAHPRKPTGAPPPDLDALKTLLNDPNLRNAPAAPAQNDLLQNPALLMSIIDQAKKR</sequence>
<accession>Q6C0K9</accession>
<evidence type="ECO:0000250" key="1"/>
<evidence type="ECO:0000255" key="2">
    <source>
        <dbReference type="PROSITE-ProRule" id="PRU00651"/>
    </source>
</evidence>
<evidence type="ECO:0000256" key="3">
    <source>
        <dbReference type="SAM" id="MobiDB-lite"/>
    </source>
</evidence>
<evidence type="ECO:0000305" key="4"/>
<keyword id="KW-0479">Metal-binding</keyword>
<keyword id="KW-0539">Nucleus</keyword>
<keyword id="KW-1185">Reference proteome</keyword>
<keyword id="KW-0678">Repressor</keyword>
<keyword id="KW-0804">Transcription</keyword>
<keyword id="KW-0805">Transcription regulation</keyword>
<keyword id="KW-0862">Zinc</keyword>
<keyword id="KW-0863">Zinc-finger</keyword>
<organism>
    <name type="scientific">Yarrowia lipolytica (strain CLIB 122 / E 150)</name>
    <name type="common">Yeast</name>
    <name type="synonym">Candida lipolytica</name>
    <dbReference type="NCBI Taxonomy" id="284591"/>
    <lineage>
        <taxon>Eukaryota</taxon>
        <taxon>Fungi</taxon>
        <taxon>Dikarya</taxon>
        <taxon>Ascomycota</taxon>
        <taxon>Saccharomycotina</taxon>
        <taxon>Dipodascomycetes</taxon>
        <taxon>Dipodascales</taxon>
        <taxon>Dipodascales incertae sedis</taxon>
        <taxon>Yarrowia</taxon>
    </lineage>
</organism>
<dbReference type="EMBL" id="CR382132">
    <property type="protein sequence ID" value="CAG78614.1"/>
    <property type="molecule type" value="Genomic_DNA"/>
</dbReference>
<dbReference type="RefSeq" id="XP_505803.1">
    <property type="nucleotide sequence ID" value="XM_505803.1"/>
</dbReference>
<dbReference type="SMR" id="Q6C0K9"/>
<dbReference type="FunCoup" id="Q6C0K9">
    <property type="interactions" value="15"/>
</dbReference>
<dbReference type="STRING" id="284591.Q6C0K9"/>
<dbReference type="EnsemblFungi" id="CAG78614">
    <property type="protein sequence ID" value="CAG78614"/>
    <property type="gene ID" value="YALI0_F23815g"/>
</dbReference>
<dbReference type="KEGG" id="yli:2908747"/>
<dbReference type="VEuPathDB" id="FungiDB:YALI0_F23815g"/>
<dbReference type="HOGENOM" id="CLU_344246_0_0_1"/>
<dbReference type="InParanoid" id="Q6C0K9"/>
<dbReference type="OMA" id="AWISCET"/>
<dbReference type="OrthoDB" id="121903at4891"/>
<dbReference type="Proteomes" id="UP000001300">
    <property type="component" value="Chromosome F"/>
</dbReference>
<dbReference type="GO" id="GO:0005634">
    <property type="term" value="C:nucleus"/>
    <property type="evidence" value="ECO:0000318"/>
    <property type="project" value="GO_Central"/>
</dbReference>
<dbReference type="GO" id="GO:0008270">
    <property type="term" value="F:zinc ion binding"/>
    <property type="evidence" value="ECO:0007669"/>
    <property type="project" value="UniProtKB-KW"/>
</dbReference>
<dbReference type="GO" id="GO:0006351">
    <property type="term" value="P:DNA-templated transcription"/>
    <property type="evidence" value="ECO:0007669"/>
    <property type="project" value="InterPro"/>
</dbReference>
<dbReference type="GO" id="GO:0006357">
    <property type="term" value="P:regulation of transcription by RNA polymerase II"/>
    <property type="evidence" value="ECO:0000318"/>
    <property type="project" value="GO_Central"/>
</dbReference>
<dbReference type="CDD" id="cd21538">
    <property type="entry name" value="SPOC_TFIIS"/>
    <property type="match status" value="1"/>
</dbReference>
<dbReference type="Gene3D" id="1.10.472.30">
    <property type="entry name" value="Transcription elongation factor S-II, central domain"/>
    <property type="match status" value="1"/>
</dbReference>
<dbReference type="Gene3D" id="3.30.40.10">
    <property type="entry name" value="Zinc/RING finger domain, C3HC4 (zinc finger)"/>
    <property type="match status" value="1"/>
</dbReference>
<dbReference type="InterPro" id="IPR012921">
    <property type="entry name" value="SPOC_C"/>
</dbReference>
<dbReference type="InterPro" id="IPR003618">
    <property type="entry name" value="TFIIS_cen_dom"/>
</dbReference>
<dbReference type="InterPro" id="IPR036575">
    <property type="entry name" value="TFIIS_cen_dom_sf"/>
</dbReference>
<dbReference type="InterPro" id="IPR019786">
    <property type="entry name" value="Zinc_finger_PHD-type_CS"/>
</dbReference>
<dbReference type="InterPro" id="IPR011011">
    <property type="entry name" value="Znf_FYVE_PHD"/>
</dbReference>
<dbReference type="InterPro" id="IPR013083">
    <property type="entry name" value="Znf_RING/FYVE/PHD"/>
</dbReference>
<dbReference type="PANTHER" id="PTHR11477:SF11">
    <property type="entry name" value="TRANSCRIPTION FACTOR BYE1"/>
    <property type="match status" value="1"/>
</dbReference>
<dbReference type="PANTHER" id="PTHR11477">
    <property type="entry name" value="TRANSCRIPTION FACTOR S-II ZINC FINGER DOMAIN-CONTAINING PROTEIN"/>
    <property type="match status" value="1"/>
</dbReference>
<dbReference type="Pfam" id="PF20826">
    <property type="entry name" value="PHD_5"/>
    <property type="match status" value="1"/>
</dbReference>
<dbReference type="Pfam" id="PF07744">
    <property type="entry name" value="SPOC"/>
    <property type="match status" value="1"/>
</dbReference>
<dbReference type="Pfam" id="PF07500">
    <property type="entry name" value="TFIIS_M"/>
    <property type="match status" value="1"/>
</dbReference>
<dbReference type="SMART" id="SM00510">
    <property type="entry name" value="TFS2M"/>
    <property type="match status" value="1"/>
</dbReference>
<dbReference type="SUPFAM" id="SSF46942">
    <property type="entry name" value="Elongation factor TFIIS domain 2"/>
    <property type="match status" value="1"/>
</dbReference>
<dbReference type="SUPFAM" id="SSF57903">
    <property type="entry name" value="FYVE/PHD zinc finger"/>
    <property type="match status" value="1"/>
</dbReference>
<dbReference type="PROSITE" id="PS51321">
    <property type="entry name" value="TFIIS_CENTRAL"/>
    <property type="match status" value="1"/>
</dbReference>
<dbReference type="PROSITE" id="PS01359">
    <property type="entry name" value="ZF_PHD_1"/>
    <property type="match status" value="1"/>
</dbReference>
<name>BYE1_YARLI</name>
<reference key="1">
    <citation type="journal article" date="2004" name="Nature">
        <title>Genome evolution in yeasts.</title>
        <authorList>
            <person name="Dujon B."/>
            <person name="Sherman D."/>
            <person name="Fischer G."/>
            <person name="Durrens P."/>
            <person name="Casaregola S."/>
            <person name="Lafontaine I."/>
            <person name="de Montigny J."/>
            <person name="Marck C."/>
            <person name="Neuveglise C."/>
            <person name="Talla E."/>
            <person name="Goffard N."/>
            <person name="Frangeul L."/>
            <person name="Aigle M."/>
            <person name="Anthouard V."/>
            <person name="Babour A."/>
            <person name="Barbe V."/>
            <person name="Barnay S."/>
            <person name="Blanchin S."/>
            <person name="Beckerich J.-M."/>
            <person name="Beyne E."/>
            <person name="Bleykasten C."/>
            <person name="Boisrame A."/>
            <person name="Boyer J."/>
            <person name="Cattolico L."/>
            <person name="Confanioleri F."/>
            <person name="de Daruvar A."/>
            <person name="Despons L."/>
            <person name="Fabre E."/>
            <person name="Fairhead C."/>
            <person name="Ferry-Dumazet H."/>
            <person name="Groppi A."/>
            <person name="Hantraye F."/>
            <person name="Hennequin C."/>
            <person name="Jauniaux N."/>
            <person name="Joyet P."/>
            <person name="Kachouri R."/>
            <person name="Kerrest A."/>
            <person name="Koszul R."/>
            <person name="Lemaire M."/>
            <person name="Lesur I."/>
            <person name="Ma L."/>
            <person name="Muller H."/>
            <person name="Nicaud J.-M."/>
            <person name="Nikolski M."/>
            <person name="Oztas S."/>
            <person name="Ozier-Kalogeropoulos O."/>
            <person name="Pellenz S."/>
            <person name="Potier S."/>
            <person name="Richard G.-F."/>
            <person name="Straub M.-L."/>
            <person name="Suleau A."/>
            <person name="Swennen D."/>
            <person name="Tekaia F."/>
            <person name="Wesolowski-Louvel M."/>
            <person name="Westhof E."/>
            <person name="Wirth B."/>
            <person name="Zeniou-Meyer M."/>
            <person name="Zivanovic Y."/>
            <person name="Bolotin-Fukuhara M."/>
            <person name="Thierry A."/>
            <person name="Bouchier C."/>
            <person name="Caudron B."/>
            <person name="Scarpelli C."/>
            <person name="Gaillardin C."/>
            <person name="Weissenbach J."/>
            <person name="Wincker P."/>
            <person name="Souciet J.-L."/>
        </authorList>
    </citation>
    <scope>NUCLEOTIDE SEQUENCE [LARGE SCALE GENOMIC DNA]</scope>
    <source>
        <strain>CLIB 122 / E 150</strain>
    </source>
</reference>
<comment type="function">
    <text evidence="1">Negative regulator of transcription elongation.</text>
</comment>
<comment type="subcellular location">
    <subcellularLocation>
        <location evidence="2">Nucleus</location>
    </subcellularLocation>
</comment>
<comment type="similarity">
    <text evidence="4">Belongs to the BYE1 family.</text>
</comment>
<proteinExistence type="inferred from homology"/>
<feature type="chain" id="PRO_0000324851" description="Transcription factor BYE1">
    <location>
        <begin position="1"/>
        <end position="822"/>
    </location>
</feature>
<feature type="domain" description="TFIIS central" evidence="2">
    <location>
        <begin position="198"/>
        <end position="323"/>
    </location>
</feature>
<feature type="zinc finger region" description="PHD-type">
    <location>
        <begin position="78"/>
        <end position="132"/>
    </location>
</feature>
<feature type="region of interest" description="Disordered" evidence="3">
    <location>
        <begin position="1"/>
        <end position="93"/>
    </location>
</feature>
<feature type="region of interest" description="Disordered" evidence="3">
    <location>
        <begin position="132"/>
        <end position="189"/>
    </location>
</feature>
<feature type="region of interest" description="Disordered" evidence="3">
    <location>
        <begin position="359"/>
        <end position="409"/>
    </location>
</feature>
<feature type="region of interest" description="Disordered" evidence="3">
    <location>
        <begin position="417"/>
        <end position="436"/>
    </location>
</feature>
<feature type="region of interest" description="Disordered" evidence="3">
    <location>
        <begin position="632"/>
        <end position="682"/>
    </location>
</feature>
<feature type="region of interest" description="Disordered" evidence="3">
    <location>
        <begin position="755"/>
        <end position="778"/>
    </location>
</feature>
<feature type="compositionally biased region" description="Basic residues" evidence="3">
    <location>
        <begin position="11"/>
        <end position="21"/>
    </location>
</feature>
<feature type="compositionally biased region" description="Basic and acidic residues" evidence="3">
    <location>
        <begin position="22"/>
        <end position="48"/>
    </location>
</feature>
<feature type="compositionally biased region" description="Basic residues" evidence="3">
    <location>
        <begin position="49"/>
        <end position="71"/>
    </location>
</feature>
<feature type="compositionally biased region" description="Basic and acidic residues" evidence="3">
    <location>
        <begin position="148"/>
        <end position="166"/>
    </location>
</feature>
<feature type="compositionally biased region" description="Basic and acidic residues" evidence="3">
    <location>
        <begin position="359"/>
        <end position="383"/>
    </location>
</feature>
<feature type="compositionally biased region" description="Polar residues" evidence="3">
    <location>
        <begin position="392"/>
        <end position="404"/>
    </location>
</feature>
<feature type="compositionally biased region" description="Basic and acidic residues" evidence="3">
    <location>
        <begin position="637"/>
        <end position="653"/>
    </location>
</feature>
<feature type="compositionally biased region" description="Low complexity" evidence="3">
    <location>
        <begin position="655"/>
        <end position="664"/>
    </location>
</feature>
<feature type="compositionally biased region" description="Low complexity" evidence="3">
    <location>
        <begin position="673"/>
        <end position="682"/>
    </location>
</feature>
<gene>
    <name type="primary">BYE1</name>
    <name type="ordered locus">YALI0F23815g</name>
</gene>
<protein>
    <recommendedName>
        <fullName>Transcription factor BYE1</fullName>
    </recommendedName>
</protein>